<protein>
    <recommendedName>
        <fullName>Nucleoprotein</fullName>
    </recommendedName>
    <alternativeName>
        <fullName>Nucleocapsid protein</fullName>
        <shortName>NC</shortName>
        <shortName>Protein N</shortName>
    </alternativeName>
</protein>
<feature type="chain" id="PRO_0000106128" description="Nucleoprotein">
    <location>
        <begin position="1"/>
        <end position="160"/>
    </location>
</feature>
<feature type="region of interest" description="involved in nuclear and nucleolar localization" evidence="2">
    <location>
        <begin position="31"/>
        <end position="60"/>
    </location>
</feature>
<feature type="region of interest" description="Disordered" evidence="3">
    <location>
        <begin position="44"/>
        <end position="88"/>
    </location>
</feature>
<feature type="short sequence motif" description="Nuclear export signal" evidence="2">
    <location>
        <begin position="146"/>
        <end position="155"/>
    </location>
</feature>
<feature type="compositionally biased region" description="Low complexity" evidence="3">
    <location>
        <begin position="46"/>
        <end position="83"/>
    </location>
</feature>
<evidence type="ECO:0000250" key="1"/>
<evidence type="ECO:0000250" key="2">
    <source>
        <dbReference type="UniProtKB" id="O90306"/>
    </source>
</evidence>
<evidence type="ECO:0000256" key="3">
    <source>
        <dbReference type="SAM" id="MobiDB-lite"/>
    </source>
</evidence>
<evidence type="ECO:0000305" key="4"/>
<keyword id="KW-1048">Host nucleus</keyword>
<keyword id="KW-0687">Ribonucleoprotein</keyword>
<keyword id="KW-0694">RNA-binding</keyword>
<keyword id="KW-0543">Viral nucleoprotein</keyword>
<keyword id="KW-0946">Virion</keyword>
<dbReference type="EMBL" id="D00563">
    <property type="protein sequence ID" value="BAA00437.1"/>
    <property type="molecule type" value="mRNA"/>
</dbReference>
<dbReference type="PIR" id="A33613">
    <property type="entry name" value="VHWJBV"/>
</dbReference>
<dbReference type="IntAct" id="P23051">
    <property type="interactions" value="2"/>
</dbReference>
<dbReference type="Proteomes" id="UP000006571">
    <property type="component" value="Genome"/>
</dbReference>
<dbReference type="GO" id="GO:0044196">
    <property type="term" value="C:host cell nucleolus"/>
    <property type="evidence" value="ECO:0007669"/>
    <property type="project" value="UniProtKB-SubCell"/>
</dbReference>
<dbReference type="GO" id="GO:0044095">
    <property type="term" value="C:host cell nucleoplasm"/>
    <property type="evidence" value="ECO:0007669"/>
    <property type="project" value="UniProtKB-SubCell"/>
</dbReference>
<dbReference type="GO" id="GO:1990904">
    <property type="term" value="C:ribonucleoprotein complex"/>
    <property type="evidence" value="ECO:0007669"/>
    <property type="project" value="UniProtKB-KW"/>
</dbReference>
<dbReference type="GO" id="GO:0019013">
    <property type="term" value="C:viral nucleocapsid"/>
    <property type="evidence" value="ECO:0007669"/>
    <property type="project" value="UniProtKB-KW"/>
</dbReference>
<dbReference type="GO" id="GO:0003723">
    <property type="term" value="F:RNA binding"/>
    <property type="evidence" value="ECO:0007669"/>
    <property type="project" value="UniProtKB-KW"/>
</dbReference>
<dbReference type="InterPro" id="IPR020253">
    <property type="entry name" value="Torovirus_nucleocapsid"/>
</dbReference>
<dbReference type="Pfam" id="PF11030">
    <property type="entry name" value="Nucleocapsid-N"/>
    <property type="match status" value="1"/>
</dbReference>
<sequence>MNSMLNPNAVPFQPSPQVVALPMQYPSGFSSGYRRQRDPAFRPMFRRQNNGNQNRSRQNRQRLQNNNRGNNRNRNQFNRRQNQPSQSMSFEQQLLLMANETAYAATYPSDMQNIAPTKLVKIAKRAAMQIVSGHATVEISNGTEDSNQRVATFTIKVVMN</sequence>
<accession>P23051</accession>
<comment type="function">
    <text evidence="1">Major structural component of virions that associates with genomic RNA.</text>
</comment>
<comment type="subcellular location">
    <subcellularLocation>
        <location evidence="2">Virion</location>
    </subcellularLocation>
    <subcellularLocation>
        <location evidence="2">Host nucleus</location>
        <location evidence="2">Host nucleoplasm</location>
    </subcellularLocation>
    <subcellularLocation>
        <location evidence="2">Host nucleus</location>
        <location evidence="2">Host nucleolus</location>
    </subcellularLocation>
    <text evidence="1 2">Located inside the virion, complexed with the viral RNA. Localized in the nucleolus during early infection, but is excluded from the nucleolus during later infection and accumulates then nonuniformly in the nucleoplasm.</text>
</comment>
<comment type="similarity">
    <text evidence="4">Belongs to the toroviruses nucleocapsid protein family.</text>
</comment>
<name>NCAP_BEV</name>
<gene>
    <name type="primary">N</name>
</gene>
<organism>
    <name type="scientific">Berne virus</name>
    <name type="common">BEV</name>
    <dbReference type="NCBI Taxonomy" id="11156"/>
    <lineage>
        <taxon>Viruses</taxon>
        <taxon>Riboviria</taxon>
        <taxon>Orthornavirae</taxon>
        <taxon>Pisuviricota</taxon>
        <taxon>Pisoniviricetes</taxon>
        <taxon>Nidovirales</taxon>
        <taxon>Tornidovirineae</taxon>
        <taxon>Tobaniviridae</taxon>
        <taxon>Torovirinae</taxon>
        <taxon>Torovirus</taxon>
        <taxon>Renitovirus</taxon>
        <taxon>Equine torovirus</taxon>
    </lineage>
</organism>
<reference key="1">
    <citation type="journal article" date="1989" name="J. Gen. Virol.">
        <title>Identification and primary structure of the gene encoding the Berne virus nucleocapsid protein.</title>
        <authorList>
            <person name="Snijder E.J."/>
            <person name="den Boon J.A."/>
            <person name="Spaan W.J.M."/>
            <person name="Verjans G.M.G.M."/>
            <person name="Horzinek M.C."/>
        </authorList>
    </citation>
    <scope>NUCLEOTIDE SEQUENCE [MRNA]</scope>
    <source>
        <strain>Isolate P138/72</strain>
    </source>
</reference>
<proteinExistence type="evidence at transcript level"/>
<organismHost>
    <name type="scientific">Equus caballus</name>
    <name type="common">Horse</name>
    <dbReference type="NCBI Taxonomy" id="9796"/>
</organismHost>